<organism>
    <name type="scientific">Thermothelomyces thermophilus</name>
    <name type="common">Myceliophthora thermophila</name>
    <dbReference type="NCBI Taxonomy" id="78579"/>
    <lineage>
        <taxon>Eukaryota</taxon>
        <taxon>Fungi</taxon>
        <taxon>Dikarya</taxon>
        <taxon>Ascomycota</taxon>
        <taxon>Pezizomycotina</taxon>
        <taxon>Sordariomycetes</taxon>
        <taxon>Sordariomycetidae</taxon>
        <taxon>Sordariales</taxon>
        <taxon>Chaetomiaceae</taxon>
        <taxon>Thermothelomyces</taxon>
    </lineage>
</organism>
<accession>A0A1C9CXI1</accession>
<comment type="function">
    <text evidence="5 6">Lytic polysaccharide monooxygenase (LPMO) that depolymerizes crystalline and amorphous polysaccharides via the oxidation of scissile alpha- or beta-(1-4)-glycosidic bonds, yielding C1 oxidation products (PubMed:27588039, PubMed:28491137). Catalysis by LPMOs requires the reduction of the active-site copper from Cu(II) to Cu(I) by a reducing agent and H(2)O(2) or O(2) as a cosubstrate (PubMed:27588039). Is active on regenerated amorphous cellulose (RAC) (PubMed:27588039).</text>
</comment>
<comment type="catalytic activity">
    <reaction evidence="5 6">
        <text>[(1-&gt;4)-beta-D-glucosyl]n+m + reduced acceptor + O2 = 4-dehydro-beta-D-glucosyl-[(1-&gt;4)-beta-D-glucosyl]n-1 + [(1-&gt;4)-beta-D-glucosyl]m + acceptor + H2O.</text>
        <dbReference type="EC" id="1.14.99.56"/>
    </reaction>
</comment>
<comment type="cofactor">
    <cofactor evidence="9">
        <name>Cu(2+)</name>
        <dbReference type="ChEBI" id="CHEBI:29036"/>
    </cofactor>
    <text evidence="9">Binds 1 copper ion per subunit.</text>
</comment>
<comment type="activity regulation">
    <text evidence="5">Is able to utilize various natural phenolic compounds as reducing agents. Most of these reducing agents are present in plants, either free or as lignin building blocks, such as sinapic acid, or as flavonoids such as catechin and dopamine (PubMed:27588039). Phenolic compounds with 1,2-benzenediol and 1,2,3-benzenetriol moieties yield the highest release of oxidized and non-oxidized glucooligosaccharides from cellulose compared to monophenols or sulfur-containing compounds (PubMed:27588039).</text>
</comment>
<comment type="subcellular location">
    <subcellularLocation>
        <location evidence="9">Secreted</location>
    </subcellularLocation>
</comment>
<comment type="domain">
    <text evidence="5">Has a modular structure: an endo-beta-1,4-glucanase catalytic module at the N-terminus, a linker rich in serines and threonines, and a C-terminal carbohydrate-binding module (CBM). The genes for catalytic modules and CBMs seem to have evolved separately and have been linked by gene fusion.</text>
</comment>
<comment type="biotechnology">
    <text evidence="6">Lignocellulose is the most abundant polymeric composite on Earth and is a recalcitrant but promising renewable substrate for industrial biotechnology applications. Together with cellobiose dehydrogenases (CDHs) an enzymatic system capable of oxidative cellulose cleavage is formed, which increases the efficiency of cellulases and put LPMOs at focus of biofuel research (PubMed:28491137). Concerted enzymatic process involving the initial conversion of monophenols into diphenols by the polyphenol oxidase PPO7 leads to up to 75-fold improvement in LPMO9B-driven cellulose degradation (PubMed:28491137).</text>
</comment>
<comment type="similarity">
    <text evidence="8">Belongs to the polysaccharide monooxygenase AA9 family.</text>
</comment>
<evidence type="ECO:0000250" key="1">
    <source>
        <dbReference type="UniProtKB" id="Q1K8B6"/>
    </source>
</evidence>
<evidence type="ECO:0000250" key="2">
    <source>
        <dbReference type="UniProtKB" id="Q4WP32"/>
    </source>
</evidence>
<evidence type="ECO:0000255" key="3"/>
<evidence type="ECO:0000255" key="4">
    <source>
        <dbReference type="PROSITE-ProRule" id="PRU00597"/>
    </source>
</evidence>
<evidence type="ECO:0000269" key="5">
    <source>
    </source>
</evidence>
<evidence type="ECO:0000269" key="6">
    <source>
    </source>
</evidence>
<evidence type="ECO:0000303" key="7">
    <source>
    </source>
</evidence>
<evidence type="ECO:0000305" key="8"/>
<evidence type="ECO:0000305" key="9">
    <source>
    </source>
</evidence>
<sequence>MKSFTLTTLAALAGNAAAHATFQALWVDGVDYGAQCARLPASNSPVTDVTSNAIRCNANPSPARGKCPVKAGSTVTVEMHQQPGDRSCSSEAIGGAHYGPVMVYMSKVSDAASADGSSGWFKVFEDGWAKNPSGGSGDDDYWGTKDLNSCCGKMNVKIPADLPSGDYLLRAEALALHTAGSAGGAQFYMTCYQLTVTGSGSASPPTVSFPGAYKATDPGILVNIHAPLSGYTVPGPAVYSGGSTKKAGSACTGCESTCAVGSGPTATVSQSPGSTATSAPGGGGGCTVQKYQQCGGQGYTGCTNCASGSTCSAVSPPYYSQCV</sequence>
<reference key="1">
    <citation type="journal article" date="2016" name="Biotechnol. Biofuels">
        <title>Lytic polysaccharide monooxygenases from Myceliophthora thermophila C1 differ in substrate preference and reducing agent specificity.</title>
        <authorList>
            <person name="Frommhagen M."/>
            <person name="Koetsier M.J."/>
            <person name="Westphal A.H."/>
            <person name="Visser J."/>
            <person name="Hinz S.W."/>
            <person name="Vincken J.P."/>
            <person name="van Berkel W.J."/>
            <person name="Kabel M.A."/>
            <person name="Gruppen H."/>
        </authorList>
    </citation>
    <scope>NUCLEOTIDE SEQUENCE [MRNA]</scope>
    <scope>FUNCTION</scope>
    <scope>CATALYTIC ACTIVITY</scope>
    <scope>ACTIVITY REGULATION</scope>
    <scope>BIOTECHNOLOGY</scope>
    <source>
        <strain>C1</strain>
    </source>
</reference>
<reference key="2">
    <citation type="journal article" date="2017" name="Biotechnol. Biofuels">
        <title>Boosting LPMO-driven lignocellulose degradation by polyphenol oxidase-activated lignin building blocks.</title>
        <authorList>
            <person name="Frommhagen M."/>
            <person name="Mutte S.K."/>
            <person name="Westphal A.H."/>
            <person name="Koetsier M.J."/>
            <person name="Hinz S.W.A."/>
            <person name="Visser J."/>
            <person name="Vincken J.P."/>
            <person name="Weijers D."/>
            <person name="van Berkel W.J.H."/>
            <person name="Gruppen H."/>
            <person name="Kabel M.A."/>
        </authorList>
    </citation>
    <scope>FUNCTION</scope>
    <scope>CATALYTIC ACTIVITY</scope>
    <scope>BIOTECHNOLOGY</scope>
</reference>
<gene>
    <name evidence="7" type="primary">LPMO9B</name>
</gene>
<feature type="signal peptide" evidence="3">
    <location>
        <begin position="1"/>
        <end position="18"/>
    </location>
</feature>
<feature type="chain" id="PRO_5008894255" description="AA9 family lytic polysaccharide monooxygenase B">
    <location>
        <begin position="19"/>
        <end position="323"/>
    </location>
</feature>
<feature type="domain" description="CBM1" evidence="4">
    <location>
        <begin position="286"/>
        <end position="323"/>
    </location>
</feature>
<feature type="binding site" evidence="1">
    <location>
        <position position="19"/>
    </location>
    <ligand>
        <name>Cu(2+)</name>
        <dbReference type="ChEBI" id="CHEBI:29036"/>
        <note>catalytic</note>
    </ligand>
</feature>
<feature type="binding site" evidence="1">
    <location>
        <position position="97"/>
    </location>
    <ligand>
        <name>Cu(2+)</name>
        <dbReference type="ChEBI" id="CHEBI:29036"/>
        <note>catalytic</note>
    </ligand>
</feature>
<feature type="binding site" evidence="1">
    <location>
        <position position="177"/>
    </location>
    <ligand>
        <name>O2</name>
        <dbReference type="ChEBI" id="CHEBI:15379"/>
    </ligand>
</feature>
<feature type="binding site" evidence="1">
    <location>
        <position position="186"/>
    </location>
    <ligand>
        <name>O2</name>
        <dbReference type="ChEBI" id="CHEBI:15379"/>
    </ligand>
</feature>
<feature type="binding site" evidence="1">
    <location>
        <position position="188"/>
    </location>
    <ligand>
        <name>Cu(2+)</name>
        <dbReference type="ChEBI" id="CHEBI:29036"/>
        <note>catalytic</note>
    </ligand>
</feature>
<feature type="disulfide bond" evidence="2">
    <location>
        <begin position="56"/>
        <end position="191"/>
    </location>
</feature>
<keyword id="KW-0119">Carbohydrate metabolism</keyword>
<keyword id="KW-0136">Cellulose degradation</keyword>
<keyword id="KW-0186">Copper</keyword>
<keyword id="KW-1015">Disulfide bond</keyword>
<keyword id="KW-0479">Metal-binding</keyword>
<keyword id="KW-0503">Monooxygenase</keyword>
<keyword id="KW-0560">Oxidoreductase</keyword>
<keyword id="KW-0624">Polysaccharide degradation</keyword>
<keyword id="KW-0964">Secreted</keyword>
<keyword id="KW-0732">Signal</keyword>
<proteinExistence type="evidence at protein level"/>
<name>LP9B_THETO</name>
<dbReference type="EC" id="1.14.99.56" evidence="5 6"/>
<dbReference type="EMBL" id="KX772410">
    <property type="protein sequence ID" value="AON76800.1"/>
    <property type="molecule type" value="mRNA"/>
</dbReference>
<dbReference type="SMR" id="A0A1C9CXI1"/>
<dbReference type="VEuPathDB" id="FungiDB:MYCTH_80312"/>
<dbReference type="OMA" id="YGSQCAR"/>
<dbReference type="BRENDA" id="1.14.99.54">
    <property type="organism ID" value="13804"/>
</dbReference>
<dbReference type="GO" id="GO:0005576">
    <property type="term" value="C:extracellular region"/>
    <property type="evidence" value="ECO:0007669"/>
    <property type="project" value="UniProtKB-SubCell"/>
</dbReference>
<dbReference type="GO" id="GO:0030248">
    <property type="term" value="F:cellulose binding"/>
    <property type="evidence" value="ECO:0007669"/>
    <property type="project" value="InterPro"/>
</dbReference>
<dbReference type="GO" id="GO:0046872">
    <property type="term" value="F:metal ion binding"/>
    <property type="evidence" value="ECO:0007669"/>
    <property type="project" value="UniProtKB-KW"/>
</dbReference>
<dbReference type="GO" id="GO:0004497">
    <property type="term" value="F:monooxygenase activity"/>
    <property type="evidence" value="ECO:0007669"/>
    <property type="project" value="UniProtKB-KW"/>
</dbReference>
<dbReference type="GO" id="GO:0030245">
    <property type="term" value="P:cellulose catabolic process"/>
    <property type="evidence" value="ECO:0007669"/>
    <property type="project" value="UniProtKB-KW"/>
</dbReference>
<dbReference type="CDD" id="cd21175">
    <property type="entry name" value="LPMO_AA9"/>
    <property type="match status" value="1"/>
</dbReference>
<dbReference type="Gene3D" id="2.70.50.70">
    <property type="match status" value="1"/>
</dbReference>
<dbReference type="InterPro" id="IPR049892">
    <property type="entry name" value="AA9"/>
</dbReference>
<dbReference type="InterPro" id="IPR005103">
    <property type="entry name" value="AA9_LPMO"/>
</dbReference>
<dbReference type="InterPro" id="IPR035971">
    <property type="entry name" value="CBD_sf"/>
</dbReference>
<dbReference type="InterPro" id="IPR000254">
    <property type="entry name" value="Cellulose-bd_dom_fun"/>
</dbReference>
<dbReference type="PANTHER" id="PTHR33353:SF9">
    <property type="entry name" value="ENDOGLUCANASE II"/>
    <property type="match status" value="1"/>
</dbReference>
<dbReference type="PANTHER" id="PTHR33353">
    <property type="entry name" value="PUTATIVE (AFU_ORTHOLOGUE AFUA_1G12560)-RELATED"/>
    <property type="match status" value="1"/>
</dbReference>
<dbReference type="Pfam" id="PF03443">
    <property type="entry name" value="AA9"/>
    <property type="match status" value="1"/>
</dbReference>
<dbReference type="Pfam" id="PF00734">
    <property type="entry name" value="CBM_1"/>
    <property type="match status" value="1"/>
</dbReference>
<dbReference type="SMART" id="SM00236">
    <property type="entry name" value="fCBD"/>
    <property type="match status" value="1"/>
</dbReference>
<dbReference type="SUPFAM" id="SSF57180">
    <property type="entry name" value="Cellulose-binding domain"/>
    <property type="match status" value="1"/>
</dbReference>
<dbReference type="PROSITE" id="PS51164">
    <property type="entry name" value="CBM1_2"/>
    <property type="match status" value="1"/>
</dbReference>
<protein>
    <recommendedName>
        <fullName evidence="7">AA9 family lytic polysaccharide monooxygenase B</fullName>
        <shortName evidence="7">LPMO9B</shortName>
        <ecNumber evidence="5 6">1.14.99.56</ecNumber>
    </recommendedName>
    <alternativeName>
        <fullName evidence="8">Cellulase LPMO9A</fullName>
    </alternativeName>
    <alternativeName>
        <fullName evidence="8">Endo-beta-1,4-glucanase LPMO9B</fullName>
        <shortName evidence="8">Endoglucanase LPMO9B</shortName>
    </alternativeName>
    <alternativeName>
        <fullName evidence="8">Glycosyl hydrolase 61 family protein LPMO9B</fullName>
    </alternativeName>
</protein>